<feature type="chain" id="PRO_0000256825" description="Serine/threonine-protein kinase ppk27">
    <location>
        <begin position="1"/>
        <end position="413"/>
    </location>
</feature>
<feature type="domain" description="Protein kinase" evidence="1">
    <location>
        <begin position="102"/>
        <end position="403"/>
    </location>
</feature>
<feature type="active site" description="Proton acceptor" evidence="1 2">
    <location>
        <position position="231"/>
    </location>
</feature>
<feature type="binding site" evidence="1">
    <location>
        <begin position="108"/>
        <end position="116"/>
    </location>
    <ligand>
        <name>ATP</name>
        <dbReference type="ChEBI" id="CHEBI:30616"/>
    </ligand>
</feature>
<feature type="binding site" evidence="1">
    <location>
        <position position="133"/>
    </location>
    <ligand>
        <name>ATP</name>
        <dbReference type="ChEBI" id="CHEBI:30616"/>
    </ligand>
</feature>
<comment type="catalytic activity">
    <reaction>
        <text>L-seryl-[protein] + ATP = O-phospho-L-seryl-[protein] + ADP + H(+)</text>
        <dbReference type="Rhea" id="RHEA:17989"/>
        <dbReference type="Rhea" id="RHEA-COMP:9863"/>
        <dbReference type="Rhea" id="RHEA-COMP:11604"/>
        <dbReference type="ChEBI" id="CHEBI:15378"/>
        <dbReference type="ChEBI" id="CHEBI:29999"/>
        <dbReference type="ChEBI" id="CHEBI:30616"/>
        <dbReference type="ChEBI" id="CHEBI:83421"/>
        <dbReference type="ChEBI" id="CHEBI:456216"/>
        <dbReference type="EC" id="2.7.11.1"/>
    </reaction>
</comment>
<comment type="catalytic activity">
    <reaction>
        <text>L-threonyl-[protein] + ATP = O-phospho-L-threonyl-[protein] + ADP + H(+)</text>
        <dbReference type="Rhea" id="RHEA:46608"/>
        <dbReference type="Rhea" id="RHEA-COMP:11060"/>
        <dbReference type="Rhea" id="RHEA-COMP:11605"/>
        <dbReference type="ChEBI" id="CHEBI:15378"/>
        <dbReference type="ChEBI" id="CHEBI:30013"/>
        <dbReference type="ChEBI" id="CHEBI:30616"/>
        <dbReference type="ChEBI" id="CHEBI:61977"/>
        <dbReference type="ChEBI" id="CHEBI:456216"/>
        <dbReference type="EC" id="2.7.11.1"/>
    </reaction>
</comment>
<comment type="subcellular location">
    <subcellularLocation>
        <location evidence="3">Cytoplasm</location>
    </subcellularLocation>
</comment>
<comment type="similarity">
    <text evidence="1">Belongs to the protein kinase superfamily. Ser/Thr protein kinase family.</text>
</comment>
<organism>
    <name type="scientific">Schizosaccharomyces pombe (strain 972 / ATCC 24843)</name>
    <name type="common">Fission yeast</name>
    <dbReference type="NCBI Taxonomy" id="284812"/>
    <lineage>
        <taxon>Eukaryota</taxon>
        <taxon>Fungi</taxon>
        <taxon>Dikarya</taxon>
        <taxon>Ascomycota</taxon>
        <taxon>Taphrinomycotina</taxon>
        <taxon>Schizosaccharomycetes</taxon>
        <taxon>Schizosaccharomycetales</taxon>
        <taxon>Schizosaccharomycetaceae</taxon>
        <taxon>Schizosaccharomyces</taxon>
    </lineage>
</organism>
<proteinExistence type="inferred from homology"/>
<name>PPK27_SCHPO</name>
<reference key="1">
    <citation type="journal article" date="2002" name="Nature">
        <title>The genome sequence of Schizosaccharomyces pombe.</title>
        <authorList>
            <person name="Wood V."/>
            <person name="Gwilliam R."/>
            <person name="Rajandream M.A."/>
            <person name="Lyne M.H."/>
            <person name="Lyne R."/>
            <person name="Stewart A."/>
            <person name="Sgouros J.G."/>
            <person name="Peat N."/>
            <person name="Hayles J."/>
            <person name="Baker S.G."/>
            <person name="Basham D."/>
            <person name="Bowman S."/>
            <person name="Brooks K."/>
            <person name="Brown D."/>
            <person name="Brown S."/>
            <person name="Chillingworth T."/>
            <person name="Churcher C.M."/>
            <person name="Collins M."/>
            <person name="Connor R."/>
            <person name="Cronin A."/>
            <person name="Davis P."/>
            <person name="Feltwell T."/>
            <person name="Fraser A."/>
            <person name="Gentles S."/>
            <person name="Goble A."/>
            <person name="Hamlin N."/>
            <person name="Harris D.E."/>
            <person name="Hidalgo J."/>
            <person name="Hodgson G."/>
            <person name="Holroyd S."/>
            <person name="Hornsby T."/>
            <person name="Howarth S."/>
            <person name="Huckle E.J."/>
            <person name="Hunt S."/>
            <person name="Jagels K."/>
            <person name="James K.D."/>
            <person name="Jones L."/>
            <person name="Jones M."/>
            <person name="Leather S."/>
            <person name="McDonald S."/>
            <person name="McLean J."/>
            <person name="Mooney P."/>
            <person name="Moule S."/>
            <person name="Mungall K.L."/>
            <person name="Murphy L.D."/>
            <person name="Niblett D."/>
            <person name="Odell C."/>
            <person name="Oliver K."/>
            <person name="O'Neil S."/>
            <person name="Pearson D."/>
            <person name="Quail M.A."/>
            <person name="Rabbinowitsch E."/>
            <person name="Rutherford K.M."/>
            <person name="Rutter S."/>
            <person name="Saunders D."/>
            <person name="Seeger K."/>
            <person name="Sharp S."/>
            <person name="Skelton J."/>
            <person name="Simmonds M.N."/>
            <person name="Squares R."/>
            <person name="Squares S."/>
            <person name="Stevens K."/>
            <person name="Taylor K."/>
            <person name="Taylor R.G."/>
            <person name="Tivey A."/>
            <person name="Walsh S.V."/>
            <person name="Warren T."/>
            <person name="Whitehead S."/>
            <person name="Woodward J.R."/>
            <person name="Volckaert G."/>
            <person name="Aert R."/>
            <person name="Robben J."/>
            <person name="Grymonprez B."/>
            <person name="Weltjens I."/>
            <person name="Vanstreels E."/>
            <person name="Rieger M."/>
            <person name="Schaefer M."/>
            <person name="Mueller-Auer S."/>
            <person name="Gabel C."/>
            <person name="Fuchs M."/>
            <person name="Duesterhoeft A."/>
            <person name="Fritzc C."/>
            <person name="Holzer E."/>
            <person name="Moestl D."/>
            <person name="Hilbert H."/>
            <person name="Borzym K."/>
            <person name="Langer I."/>
            <person name="Beck A."/>
            <person name="Lehrach H."/>
            <person name="Reinhardt R."/>
            <person name="Pohl T.M."/>
            <person name="Eger P."/>
            <person name="Zimmermann W."/>
            <person name="Wedler H."/>
            <person name="Wambutt R."/>
            <person name="Purnelle B."/>
            <person name="Goffeau A."/>
            <person name="Cadieu E."/>
            <person name="Dreano S."/>
            <person name="Gloux S."/>
            <person name="Lelaure V."/>
            <person name="Mottier S."/>
            <person name="Galibert F."/>
            <person name="Aves S.J."/>
            <person name="Xiang Z."/>
            <person name="Hunt C."/>
            <person name="Moore K."/>
            <person name="Hurst S.M."/>
            <person name="Lucas M."/>
            <person name="Rochet M."/>
            <person name="Gaillardin C."/>
            <person name="Tallada V.A."/>
            <person name="Garzon A."/>
            <person name="Thode G."/>
            <person name="Daga R.R."/>
            <person name="Cruzado L."/>
            <person name="Jimenez J."/>
            <person name="Sanchez M."/>
            <person name="del Rey F."/>
            <person name="Benito J."/>
            <person name="Dominguez A."/>
            <person name="Revuelta J.L."/>
            <person name="Moreno S."/>
            <person name="Armstrong J."/>
            <person name="Forsburg S.L."/>
            <person name="Cerutti L."/>
            <person name="Lowe T."/>
            <person name="McCombie W.R."/>
            <person name="Paulsen I."/>
            <person name="Potashkin J."/>
            <person name="Shpakovski G.V."/>
            <person name="Ussery D."/>
            <person name="Barrell B.G."/>
            <person name="Nurse P."/>
        </authorList>
    </citation>
    <scope>NUCLEOTIDE SEQUENCE [LARGE SCALE GENOMIC DNA]</scope>
    <source>
        <strain>972 / ATCC 24843</strain>
    </source>
</reference>
<reference key="2">
    <citation type="journal article" date="2005" name="Eukaryot. Cell">
        <title>Systematic deletion analysis of fission yeast protein kinases.</title>
        <authorList>
            <person name="Bimbo A."/>
            <person name="Jia Y."/>
            <person name="Poh S.L."/>
            <person name="Karuturi R.K.M."/>
            <person name="den Elzen N."/>
            <person name="Peng X."/>
            <person name="Zheng L."/>
            <person name="O'Connell M."/>
            <person name="Liu E.T."/>
            <person name="Balasubramanian M.K."/>
            <person name="Liu J."/>
        </authorList>
    </citation>
    <scope>IDENTIFICATION</scope>
</reference>
<reference key="3">
    <citation type="journal article" date="2006" name="Nat. Biotechnol.">
        <title>ORFeome cloning and global analysis of protein localization in the fission yeast Schizosaccharomyces pombe.</title>
        <authorList>
            <person name="Matsuyama A."/>
            <person name="Arai R."/>
            <person name="Yashiroda Y."/>
            <person name="Shirai A."/>
            <person name="Kamata A."/>
            <person name="Sekido S."/>
            <person name="Kobayashi Y."/>
            <person name="Hashimoto A."/>
            <person name="Hamamoto M."/>
            <person name="Hiraoka Y."/>
            <person name="Horinouchi S."/>
            <person name="Yoshida M."/>
        </authorList>
    </citation>
    <scope>SUBCELLULAR LOCATION [LARGE SCALE ANALYSIS]</scope>
</reference>
<dbReference type="EC" id="2.7.11.1"/>
<dbReference type="EMBL" id="CU329671">
    <property type="protein sequence ID" value="CAA21274.1"/>
    <property type="molecule type" value="Genomic_DNA"/>
</dbReference>
<dbReference type="PIR" id="T40257">
    <property type="entry name" value="T40257"/>
</dbReference>
<dbReference type="RefSeq" id="NP_595405.1">
    <property type="nucleotide sequence ID" value="NM_001021312.1"/>
</dbReference>
<dbReference type="SMR" id="O74815"/>
<dbReference type="BioGRID" id="276843">
    <property type="interactions" value="17"/>
</dbReference>
<dbReference type="FunCoup" id="O74815">
    <property type="interactions" value="13"/>
</dbReference>
<dbReference type="STRING" id="284812.O74815"/>
<dbReference type="iPTMnet" id="O74815"/>
<dbReference type="PaxDb" id="4896-SPBC337.04.1"/>
<dbReference type="EnsemblFungi" id="SPBC337.04.1">
    <property type="protein sequence ID" value="SPBC337.04.1:pep"/>
    <property type="gene ID" value="SPBC337.04"/>
</dbReference>
<dbReference type="GeneID" id="2540313"/>
<dbReference type="KEGG" id="spo:2540313"/>
<dbReference type="PomBase" id="SPBC337.04">
    <property type="gene designation" value="ppk27"/>
</dbReference>
<dbReference type="VEuPathDB" id="FungiDB:SPBC337.04"/>
<dbReference type="eggNOG" id="KOG0586">
    <property type="taxonomic scope" value="Eukaryota"/>
</dbReference>
<dbReference type="HOGENOM" id="CLU_662503_0_0_1"/>
<dbReference type="InParanoid" id="O74815"/>
<dbReference type="OMA" id="KESHIVQ"/>
<dbReference type="PhylomeDB" id="O74815"/>
<dbReference type="PRO" id="PR:O74815"/>
<dbReference type="Proteomes" id="UP000002485">
    <property type="component" value="Chromosome II"/>
</dbReference>
<dbReference type="GO" id="GO:0005829">
    <property type="term" value="C:cytosol"/>
    <property type="evidence" value="ECO:0007005"/>
    <property type="project" value="PomBase"/>
</dbReference>
<dbReference type="GO" id="GO:0005524">
    <property type="term" value="F:ATP binding"/>
    <property type="evidence" value="ECO:0007669"/>
    <property type="project" value="UniProtKB-KW"/>
</dbReference>
<dbReference type="GO" id="GO:0106310">
    <property type="term" value="F:protein serine kinase activity"/>
    <property type="evidence" value="ECO:0007669"/>
    <property type="project" value="RHEA"/>
</dbReference>
<dbReference type="GO" id="GO:0004674">
    <property type="term" value="F:protein serine/threonine kinase activity"/>
    <property type="evidence" value="ECO:0000304"/>
    <property type="project" value="PomBase"/>
</dbReference>
<dbReference type="Gene3D" id="1.10.510.10">
    <property type="entry name" value="Transferase(Phosphotransferase) domain 1"/>
    <property type="match status" value="1"/>
</dbReference>
<dbReference type="InterPro" id="IPR011009">
    <property type="entry name" value="Kinase-like_dom_sf"/>
</dbReference>
<dbReference type="InterPro" id="IPR000719">
    <property type="entry name" value="Prot_kinase_dom"/>
</dbReference>
<dbReference type="InterPro" id="IPR008271">
    <property type="entry name" value="Ser/Thr_kinase_AS"/>
</dbReference>
<dbReference type="PANTHER" id="PTHR24346:SF82">
    <property type="entry name" value="KP78A-RELATED"/>
    <property type="match status" value="1"/>
</dbReference>
<dbReference type="PANTHER" id="PTHR24346">
    <property type="entry name" value="MAP/MICROTUBULE AFFINITY-REGULATING KINASE"/>
    <property type="match status" value="1"/>
</dbReference>
<dbReference type="Pfam" id="PF00069">
    <property type="entry name" value="Pkinase"/>
    <property type="match status" value="1"/>
</dbReference>
<dbReference type="SMART" id="SM00220">
    <property type="entry name" value="S_TKc"/>
    <property type="match status" value="1"/>
</dbReference>
<dbReference type="SUPFAM" id="SSF56112">
    <property type="entry name" value="Protein kinase-like (PK-like)"/>
    <property type="match status" value="1"/>
</dbReference>
<dbReference type="PROSITE" id="PS50011">
    <property type="entry name" value="PROTEIN_KINASE_DOM"/>
    <property type="match status" value="1"/>
</dbReference>
<dbReference type="PROSITE" id="PS00108">
    <property type="entry name" value="PROTEIN_KINASE_ST"/>
    <property type="match status" value="1"/>
</dbReference>
<protein>
    <recommendedName>
        <fullName>Serine/threonine-protein kinase ppk27</fullName>
        <ecNumber>2.7.11.1</ecNumber>
    </recommendedName>
</protein>
<evidence type="ECO:0000255" key="1">
    <source>
        <dbReference type="PROSITE-ProRule" id="PRU00159"/>
    </source>
</evidence>
<evidence type="ECO:0000255" key="2">
    <source>
        <dbReference type="PROSITE-ProRule" id="PRU10027"/>
    </source>
</evidence>
<evidence type="ECO:0000269" key="3">
    <source>
    </source>
</evidence>
<sequence>MSEKKHSCEEKSLQLYPLSNKIRHVNPNISALPSETDISESLTNDLTKLEISNYAPFNRDLETFSDLIFGLTNIQKKSLYSLQLGRSRGYALYSDENEKYLWSINTKITSTEQREVLLVKSNNKKFDTSIVLKHTHLSSKSQNEKKARVKVFRQEIWALKTLSHPCVVQLLNYYVSSAELILVENYCMGGDLYHYTKKHHSDFSLEFVGRIFSELVHTVAYLHSKCLIHRDLKLENILLTQPYNVIKTIDNWKNYPNALIQISDFELSIFVDSKNHLVQSSCGSQEYAPPEVYMGIAHDGFRADAWSLGIVLFALLEGRLPFDSYPTLDPENVRIKRYVQRLVRCDYTWHLCKSPFKRSTGNTNDNDDPSWRFRLFVKKLLKNRDQRSTPTELLKDFNKHGNFTLPLLENVTI</sequence>
<accession>O74815</accession>
<keyword id="KW-0067">ATP-binding</keyword>
<keyword id="KW-0963">Cytoplasm</keyword>
<keyword id="KW-0418">Kinase</keyword>
<keyword id="KW-0547">Nucleotide-binding</keyword>
<keyword id="KW-1185">Reference proteome</keyword>
<keyword id="KW-0723">Serine/threonine-protein kinase</keyword>
<keyword id="KW-0808">Transferase</keyword>
<gene>
    <name type="primary">ppk27</name>
    <name type="ORF">SPBC337.04</name>
</gene>